<gene>
    <name evidence="1" type="primary">argH</name>
    <name type="ordered locus">ETA_01370</name>
</gene>
<reference key="1">
    <citation type="journal article" date="2008" name="Environ. Microbiol.">
        <title>The genome of Erwinia tasmaniensis strain Et1/99, a non-pathogenic bacterium in the genus Erwinia.</title>
        <authorList>
            <person name="Kube M."/>
            <person name="Migdoll A.M."/>
            <person name="Mueller I."/>
            <person name="Kuhl H."/>
            <person name="Beck A."/>
            <person name="Reinhardt R."/>
            <person name="Geider K."/>
        </authorList>
    </citation>
    <scope>NUCLEOTIDE SEQUENCE [LARGE SCALE GENOMIC DNA]</scope>
    <source>
        <strain>DSM 17950 / CFBP 7177 / CIP 109463 / NCPPB 4357 / Et1/99</strain>
    </source>
</reference>
<keyword id="KW-0028">Amino-acid biosynthesis</keyword>
<keyword id="KW-0055">Arginine biosynthesis</keyword>
<keyword id="KW-0963">Cytoplasm</keyword>
<keyword id="KW-0456">Lyase</keyword>
<keyword id="KW-1185">Reference proteome</keyword>
<name>ARLY_ERWT9</name>
<comment type="catalytic activity">
    <reaction evidence="1">
        <text>2-(N(omega)-L-arginino)succinate = fumarate + L-arginine</text>
        <dbReference type="Rhea" id="RHEA:24020"/>
        <dbReference type="ChEBI" id="CHEBI:29806"/>
        <dbReference type="ChEBI" id="CHEBI:32682"/>
        <dbReference type="ChEBI" id="CHEBI:57472"/>
        <dbReference type="EC" id="4.3.2.1"/>
    </reaction>
</comment>
<comment type="pathway">
    <text evidence="1">Amino-acid biosynthesis; L-arginine biosynthesis; L-arginine from L-ornithine and carbamoyl phosphate: step 3/3.</text>
</comment>
<comment type="subcellular location">
    <subcellularLocation>
        <location evidence="1">Cytoplasm</location>
    </subcellularLocation>
</comment>
<comment type="similarity">
    <text evidence="1">Belongs to the lyase 1 family. Argininosuccinate lyase subfamily.</text>
</comment>
<protein>
    <recommendedName>
        <fullName evidence="1">Argininosuccinate lyase</fullName>
        <shortName evidence="1">ASAL</shortName>
        <ecNumber evidence="1">4.3.2.1</ecNumber>
    </recommendedName>
    <alternativeName>
        <fullName evidence="1">Arginosuccinase</fullName>
    </alternativeName>
</protein>
<evidence type="ECO:0000255" key="1">
    <source>
        <dbReference type="HAMAP-Rule" id="MF_00006"/>
    </source>
</evidence>
<dbReference type="EC" id="4.3.2.1" evidence="1"/>
<dbReference type="EMBL" id="CU468135">
    <property type="protein sequence ID" value="CAO95183.1"/>
    <property type="molecule type" value="Genomic_DNA"/>
</dbReference>
<dbReference type="RefSeq" id="WP_012439907.1">
    <property type="nucleotide sequence ID" value="NC_010694.1"/>
</dbReference>
<dbReference type="SMR" id="B2VGA9"/>
<dbReference type="STRING" id="465817.ETA_01370"/>
<dbReference type="KEGG" id="eta:ETA_01370"/>
<dbReference type="eggNOG" id="COG0165">
    <property type="taxonomic scope" value="Bacteria"/>
</dbReference>
<dbReference type="HOGENOM" id="CLU_027272_2_3_6"/>
<dbReference type="OrthoDB" id="9769623at2"/>
<dbReference type="UniPathway" id="UPA00068">
    <property type="reaction ID" value="UER00114"/>
</dbReference>
<dbReference type="Proteomes" id="UP000001726">
    <property type="component" value="Chromosome"/>
</dbReference>
<dbReference type="GO" id="GO:0005829">
    <property type="term" value="C:cytosol"/>
    <property type="evidence" value="ECO:0007669"/>
    <property type="project" value="TreeGrafter"/>
</dbReference>
<dbReference type="GO" id="GO:0004056">
    <property type="term" value="F:argininosuccinate lyase activity"/>
    <property type="evidence" value="ECO:0007669"/>
    <property type="project" value="UniProtKB-UniRule"/>
</dbReference>
<dbReference type="GO" id="GO:0042450">
    <property type="term" value="P:arginine biosynthetic process via ornithine"/>
    <property type="evidence" value="ECO:0007669"/>
    <property type="project" value="InterPro"/>
</dbReference>
<dbReference type="GO" id="GO:0006526">
    <property type="term" value="P:L-arginine biosynthetic process"/>
    <property type="evidence" value="ECO:0007669"/>
    <property type="project" value="UniProtKB-UniRule"/>
</dbReference>
<dbReference type="CDD" id="cd01359">
    <property type="entry name" value="Argininosuccinate_lyase"/>
    <property type="match status" value="1"/>
</dbReference>
<dbReference type="FunFam" id="1.10.275.10:FF:000004">
    <property type="entry name" value="Argininosuccinate lyase"/>
    <property type="match status" value="1"/>
</dbReference>
<dbReference type="FunFam" id="1.10.40.30:FF:000001">
    <property type="entry name" value="Argininosuccinate lyase"/>
    <property type="match status" value="1"/>
</dbReference>
<dbReference type="FunFam" id="1.20.200.10:FF:000006">
    <property type="entry name" value="Argininosuccinate lyase"/>
    <property type="match status" value="1"/>
</dbReference>
<dbReference type="Gene3D" id="1.10.40.30">
    <property type="entry name" value="Fumarase/aspartase (C-terminal domain)"/>
    <property type="match status" value="1"/>
</dbReference>
<dbReference type="Gene3D" id="1.20.200.10">
    <property type="entry name" value="Fumarase/aspartase (Central domain)"/>
    <property type="match status" value="1"/>
</dbReference>
<dbReference type="Gene3D" id="1.10.275.10">
    <property type="entry name" value="Fumarase/aspartase (N-terminal domain)"/>
    <property type="match status" value="1"/>
</dbReference>
<dbReference type="HAMAP" id="MF_00006">
    <property type="entry name" value="Arg_succ_lyase"/>
    <property type="match status" value="1"/>
</dbReference>
<dbReference type="InterPro" id="IPR029419">
    <property type="entry name" value="Arg_succ_lyase_C"/>
</dbReference>
<dbReference type="InterPro" id="IPR009049">
    <property type="entry name" value="Argininosuccinate_lyase"/>
</dbReference>
<dbReference type="InterPro" id="IPR024083">
    <property type="entry name" value="Fumarase/histidase_N"/>
</dbReference>
<dbReference type="InterPro" id="IPR020557">
    <property type="entry name" value="Fumarate_lyase_CS"/>
</dbReference>
<dbReference type="InterPro" id="IPR000362">
    <property type="entry name" value="Fumarate_lyase_fam"/>
</dbReference>
<dbReference type="InterPro" id="IPR022761">
    <property type="entry name" value="Fumarate_lyase_N"/>
</dbReference>
<dbReference type="InterPro" id="IPR008948">
    <property type="entry name" value="L-Aspartase-like"/>
</dbReference>
<dbReference type="NCBIfam" id="TIGR00838">
    <property type="entry name" value="argH"/>
    <property type="match status" value="1"/>
</dbReference>
<dbReference type="NCBIfam" id="NF008964">
    <property type="entry name" value="PRK12308.1"/>
    <property type="match status" value="1"/>
</dbReference>
<dbReference type="PANTHER" id="PTHR43814">
    <property type="entry name" value="ARGININOSUCCINATE LYASE"/>
    <property type="match status" value="1"/>
</dbReference>
<dbReference type="PANTHER" id="PTHR43814:SF1">
    <property type="entry name" value="ARGININOSUCCINATE LYASE"/>
    <property type="match status" value="1"/>
</dbReference>
<dbReference type="Pfam" id="PF14698">
    <property type="entry name" value="ASL_C2"/>
    <property type="match status" value="1"/>
</dbReference>
<dbReference type="Pfam" id="PF00206">
    <property type="entry name" value="Lyase_1"/>
    <property type="match status" value="1"/>
</dbReference>
<dbReference type="PRINTS" id="PR00145">
    <property type="entry name" value="ARGSUCLYASE"/>
</dbReference>
<dbReference type="PRINTS" id="PR00149">
    <property type="entry name" value="FUMRATELYASE"/>
</dbReference>
<dbReference type="SUPFAM" id="SSF48557">
    <property type="entry name" value="L-aspartase-like"/>
    <property type="match status" value="1"/>
</dbReference>
<dbReference type="PROSITE" id="PS00163">
    <property type="entry name" value="FUMARATE_LYASES"/>
    <property type="match status" value="1"/>
</dbReference>
<sequence length="457" mass="50255">MALWGGRFTQPADQRFKQFNDSLRFDYRLAEQDIIGSVAWSKALVTVNVLTAAEQQQLESALTALLDEVRADPQQILASDAEDIHSWVEGKLIDKVGALGKKLHTGRSRNDQVATDLKLWCKEQVSELLNATRQFQQALVATAEAHQDAVMPGYTHLQRAQPVTFAHWCLAYVEMLARDESRLQDTLKRLDVSPLGCGALAGTAYDIDREQLAGWLGFASATRNSLDTVSDRDHVLELLSDASIGMVHLSRFAEDLIFFNTGEAGFVELSDKVTSGSSLMPQKKNPDALELIRGKVGRVQGALTAMSMTLKGLPLAYNKDMQEDKEGLFDALDTWADCLHMAALVLDGIQVKRPRCQEAAEQGYANSTELADYLVAKGVPFREAHHIVGETVVEAIKQGVALEALKLSDLQKFSHVIGDDVYPILSLQSCLDKRNAKGGVSLHQISQAITEAKQRLA</sequence>
<organism>
    <name type="scientific">Erwinia tasmaniensis (strain DSM 17950 / CFBP 7177 / CIP 109463 / NCPPB 4357 / Et1/99)</name>
    <dbReference type="NCBI Taxonomy" id="465817"/>
    <lineage>
        <taxon>Bacteria</taxon>
        <taxon>Pseudomonadati</taxon>
        <taxon>Pseudomonadota</taxon>
        <taxon>Gammaproteobacteria</taxon>
        <taxon>Enterobacterales</taxon>
        <taxon>Erwiniaceae</taxon>
        <taxon>Erwinia</taxon>
    </lineage>
</organism>
<accession>B2VGA9</accession>
<feature type="chain" id="PRO_1000089082" description="Argininosuccinate lyase">
    <location>
        <begin position="1"/>
        <end position="457"/>
    </location>
</feature>
<proteinExistence type="inferred from homology"/>